<comment type="function">
    <text evidence="1">Binds directly to 23S ribosomal RNA and is necessary for the in vitro assembly process of the 50S ribosomal subunit. It is not involved in the protein synthesizing functions of that subunit.</text>
</comment>
<comment type="similarity">
    <text evidence="1">Belongs to the bacterial ribosomal protein bL20 family.</text>
</comment>
<reference key="1">
    <citation type="journal article" date="2009" name="Science">
        <title>The dynamics and time scale of ongoing genomic erosion in symbiotic bacteria.</title>
        <authorList>
            <person name="Moran N.A."/>
            <person name="McLaughlin H.J."/>
            <person name="Sorek R."/>
        </authorList>
    </citation>
    <scope>NUCLEOTIDE SEQUENCE [LARGE SCALE GENOMIC DNA]</scope>
    <source>
        <strain>5A</strain>
    </source>
</reference>
<keyword id="KW-0687">Ribonucleoprotein</keyword>
<keyword id="KW-0689">Ribosomal protein</keyword>
<keyword id="KW-0694">RNA-binding</keyword>
<keyword id="KW-0699">rRNA-binding</keyword>
<organism>
    <name type="scientific">Buchnera aphidicola subsp. Acyrthosiphon pisum (strain 5A)</name>
    <dbReference type="NCBI Taxonomy" id="563178"/>
    <lineage>
        <taxon>Bacteria</taxon>
        <taxon>Pseudomonadati</taxon>
        <taxon>Pseudomonadota</taxon>
        <taxon>Gammaproteobacteria</taxon>
        <taxon>Enterobacterales</taxon>
        <taxon>Erwiniaceae</taxon>
        <taxon>Buchnera</taxon>
    </lineage>
</organism>
<protein>
    <recommendedName>
        <fullName evidence="1">Large ribosomal subunit protein bL20</fullName>
    </recommendedName>
    <alternativeName>
        <fullName evidence="2">50S ribosomal protein L20</fullName>
    </alternativeName>
</protein>
<sequence length="118" mass="13763">MARIKRGVVAHARHKKILKQAKGYYGARSRIYRVAHQAVIKAGQYAYRDRRQRKRQFRQLWISRINAAVRQSKMSYSNFIFGLKKASINIDRKILSDIAIFDLLSFNALVKKAKEALL</sequence>
<name>RL20_BUCA5</name>
<feature type="chain" id="PRO_1000193943" description="Large ribosomal subunit protein bL20">
    <location>
        <begin position="1"/>
        <end position="118"/>
    </location>
</feature>
<evidence type="ECO:0000255" key="1">
    <source>
        <dbReference type="HAMAP-Rule" id="MF_00382"/>
    </source>
</evidence>
<evidence type="ECO:0000305" key="2"/>
<dbReference type="EMBL" id="CP001161">
    <property type="protein sequence ID" value="ACL30501.1"/>
    <property type="molecule type" value="Genomic_DNA"/>
</dbReference>
<dbReference type="RefSeq" id="WP_009874084.1">
    <property type="nucleotide sequence ID" value="NC_011833.1"/>
</dbReference>
<dbReference type="SMR" id="B8D8S9"/>
<dbReference type="KEGG" id="bap:BUAP5A_126"/>
<dbReference type="HOGENOM" id="CLU_123265_0_1_6"/>
<dbReference type="OrthoDB" id="9808966at2"/>
<dbReference type="Proteomes" id="UP000006904">
    <property type="component" value="Chromosome"/>
</dbReference>
<dbReference type="GO" id="GO:1990904">
    <property type="term" value="C:ribonucleoprotein complex"/>
    <property type="evidence" value="ECO:0007669"/>
    <property type="project" value="UniProtKB-KW"/>
</dbReference>
<dbReference type="GO" id="GO:0005840">
    <property type="term" value="C:ribosome"/>
    <property type="evidence" value="ECO:0007669"/>
    <property type="project" value="UniProtKB-KW"/>
</dbReference>
<dbReference type="GO" id="GO:0019843">
    <property type="term" value="F:rRNA binding"/>
    <property type="evidence" value="ECO:0007669"/>
    <property type="project" value="UniProtKB-UniRule"/>
</dbReference>
<dbReference type="GO" id="GO:0003735">
    <property type="term" value="F:structural constituent of ribosome"/>
    <property type="evidence" value="ECO:0007669"/>
    <property type="project" value="InterPro"/>
</dbReference>
<dbReference type="GO" id="GO:0000027">
    <property type="term" value="P:ribosomal large subunit assembly"/>
    <property type="evidence" value="ECO:0007669"/>
    <property type="project" value="UniProtKB-UniRule"/>
</dbReference>
<dbReference type="GO" id="GO:0006412">
    <property type="term" value="P:translation"/>
    <property type="evidence" value="ECO:0007669"/>
    <property type="project" value="InterPro"/>
</dbReference>
<dbReference type="CDD" id="cd07026">
    <property type="entry name" value="Ribosomal_L20"/>
    <property type="match status" value="1"/>
</dbReference>
<dbReference type="FunFam" id="1.10.1900.20:FF:000001">
    <property type="entry name" value="50S ribosomal protein L20"/>
    <property type="match status" value="1"/>
</dbReference>
<dbReference type="Gene3D" id="6.10.160.10">
    <property type="match status" value="1"/>
</dbReference>
<dbReference type="Gene3D" id="1.10.1900.20">
    <property type="entry name" value="Ribosomal protein L20"/>
    <property type="match status" value="1"/>
</dbReference>
<dbReference type="HAMAP" id="MF_00382">
    <property type="entry name" value="Ribosomal_bL20"/>
    <property type="match status" value="1"/>
</dbReference>
<dbReference type="InterPro" id="IPR005813">
    <property type="entry name" value="Ribosomal_bL20"/>
</dbReference>
<dbReference type="InterPro" id="IPR049946">
    <property type="entry name" value="RIBOSOMAL_L20_CS"/>
</dbReference>
<dbReference type="InterPro" id="IPR035566">
    <property type="entry name" value="Ribosomal_protein_bL20_C"/>
</dbReference>
<dbReference type="NCBIfam" id="TIGR01032">
    <property type="entry name" value="rplT_bact"/>
    <property type="match status" value="1"/>
</dbReference>
<dbReference type="PANTHER" id="PTHR10986">
    <property type="entry name" value="39S RIBOSOMAL PROTEIN L20"/>
    <property type="match status" value="1"/>
</dbReference>
<dbReference type="Pfam" id="PF00453">
    <property type="entry name" value="Ribosomal_L20"/>
    <property type="match status" value="1"/>
</dbReference>
<dbReference type="PRINTS" id="PR00062">
    <property type="entry name" value="RIBOSOMALL20"/>
</dbReference>
<dbReference type="SUPFAM" id="SSF74731">
    <property type="entry name" value="Ribosomal protein L20"/>
    <property type="match status" value="1"/>
</dbReference>
<dbReference type="PROSITE" id="PS00937">
    <property type="entry name" value="RIBOSOMAL_L20"/>
    <property type="match status" value="1"/>
</dbReference>
<proteinExistence type="inferred from homology"/>
<accession>B8D8S9</accession>
<gene>
    <name evidence="1" type="primary">rplT</name>
    <name type="ordered locus">BUAP5A_126</name>
</gene>